<proteinExistence type="evidence at protein level"/>
<feature type="chain" id="PRO_0000458245" description="Picrinine-N-methytransferase">
    <location>
        <begin position="1"/>
        <end position="322"/>
    </location>
</feature>
<feature type="region of interest" description="SAM motif I" evidence="2">
    <location>
        <begin position="103"/>
        <end position="112"/>
    </location>
</feature>
<feature type="region of interest" description="SAM motif II" evidence="2">
    <location>
        <begin position="166"/>
        <end position="174"/>
    </location>
</feature>
<feature type="region of interest" description="SAM motif III" evidence="2">
    <location>
        <begin position="193"/>
        <end position="202"/>
    </location>
</feature>
<comment type="function">
    <text evidence="3">S-adenosyl-L-methionine-dependent N-methyltransferase involved in the biosynthesis of biologically active monoterpenoid indole alkaloids (MIAs) natural products including vindoline (PubMed:26848097). Catalyzes the conversion of picrinine to N-methylpicrinine (ervincine) (PubMed:26848097). Also accepts, with low efficiency, 21-hydroxycyclolochnericine and norajmaline as substrates (PubMed:26848097).</text>
</comment>
<comment type="catalytic activity">
    <reaction evidence="3">
        <text>picrinine + S-adenosyl-L-methionine = ervincine + S-adenosyl-L-homocysteine + H(+)</text>
        <dbReference type="Rhea" id="RHEA:76143"/>
        <dbReference type="ChEBI" id="CHEBI:15378"/>
        <dbReference type="ChEBI" id="CHEBI:57856"/>
        <dbReference type="ChEBI" id="CHEBI:59789"/>
        <dbReference type="ChEBI" id="CHEBI:70505"/>
        <dbReference type="ChEBI" id="CHEBI:194555"/>
    </reaction>
    <physiologicalReaction direction="left-to-right" evidence="3">
        <dbReference type="Rhea" id="RHEA:76144"/>
    </physiologicalReaction>
</comment>
<comment type="biophysicochemical properties">
    <kinetics>
        <KM evidence="3">20.1 uM for picrinine</KM>
        <KM evidence="3">15.8 uM for S-adenosyl-L-methionine</KM>
        <Vmax evidence="3">100.8 pmol/sec/mg enzyme with picrinine as substrate</Vmax>
        <Vmax evidence="3">135.0 pmol/sec/mg enzyme with S-adenosyl-L-methionine as substrate</Vmax>
        <text evidence="3">kcat is 5.1 sec(-1) with picrinine as substrate (PubMed:26848097). kcat is 6.9 sec(-1) with S-adenosyl-L-methionine as substrate (PubMed:26848097).</text>
    </kinetics>
    <phDependence>
        <text evidence="3">Optimum pH is 7.</text>
    </phDependence>
    <temperatureDependence>
        <text evidence="3">Optimum temperature is 22 degrees Celsius.</text>
    </temperatureDependence>
</comment>
<comment type="pathway">
    <text evidence="3">Alkaloid biosynthesis; vindoline biosynthesis.</text>
</comment>
<comment type="subunit">
    <text evidence="1">Homodimer.</text>
</comment>
<comment type="subcellular location">
    <subcellularLocation>
        <location evidence="4">Cytoplasm</location>
        <location evidence="4">Cytosol</location>
    </subcellularLocation>
</comment>
<comment type="tissue specificity">
    <text evidence="3">Accumulates in tissues actively synthesizing monoterpenoid indole alkaloids (MIAs) (at protein level) (PubMed:26848097). Mainly expressed in young leaves, but barely in roots and stems (PubMed:26848097).</text>
</comment>
<comment type="miscellaneous">
    <text evidence="6">A signal peptide was predicted, but with a low accuracy.</text>
</comment>
<comment type="similarity">
    <text evidence="2">Belongs to the class I-like SAM-binding methyltransferase superfamily. gTMT family.</text>
</comment>
<keyword id="KW-0017">Alkaloid metabolism</keyword>
<keyword id="KW-0963">Cytoplasm</keyword>
<keyword id="KW-0489">Methyltransferase</keyword>
<keyword id="KW-0949">S-adenosyl-L-methionine</keyword>
<keyword id="KW-0808">Transferase</keyword>
<accession>A0A075D657</accession>
<reference key="1">
    <citation type="journal article" date="2016" name="Plant Physiol.">
        <title>A picrinine N-methyltransferase belongs to a new family of gamma-tocopherol-like methyltransferases found in medicinal plants that make biologically active monoterpenoid indole alkaloids.</title>
        <authorList>
            <person name="Levac D."/>
            <person name="Cazares P."/>
            <person name="Yu F."/>
            <person name="De Luca V."/>
        </authorList>
    </citation>
    <scope>NUCLEOTIDE SEQUENCE [MRNA]</scope>
    <scope>FUNCTION</scope>
    <scope>CATALYTIC ACTIVITY</scope>
    <scope>PATHWAY</scope>
    <scope>TISSUE SPECIFICITY</scope>
    <scope>BIOPHYSICOCHEMICAL PROPERTIES</scope>
    <source>
        <tissue>Leaf</tissue>
    </source>
</reference>
<reference key="2">
    <citation type="journal article" date="2022" name="Plant Cell Physiol.">
        <title>Tonoplast and peroxisome targeting of gamma-tocopherol N-methyltransferase homologs involved in the synthesis of monoterpene indole alkaloids.</title>
        <authorList>
            <person name="Koudounas K."/>
            <person name="Guirimand G."/>
            <person name="Hoyos L.F.R."/>
            <person name="Carqueijeiro I."/>
            <person name="Cruz P.L."/>
            <person name="Stander E."/>
            <person name="Kulagina N."/>
            <person name="Perrin J."/>
            <person name="Oudin A."/>
            <person name="Besseau S."/>
            <person name="Lanoue A."/>
            <person name="Atehortua L."/>
            <person name="St-Pierre B."/>
            <person name="Giglioli-Guivarc'h N."/>
            <person name="Papon N."/>
            <person name="O'Connor S.E."/>
            <person name="Courdavault V."/>
        </authorList>
    </citation>
    <scope>SUBCELLULAR LOCATION</scope>
    <scope>GENE FAMILY</scope>
</reference>
<dbReference type="EC" id="2.1.1.-" evidence="3"/>
<dbReference type="EMBL" id="KC708450">
    <property type="protein sequence ID" value="AHH02782.1"/>
    <property type="molecule type" value="mRNA"/>
</dbReference>
<dbReference type="SMR" id="A0A075D657"/>
<dbReference type="UniPathway" id="UPA00365"/>
<dbReference type="GO" id="GO:0005829">
    <property type="term" value="C:cytosol"/>
    <property type="evidence" value="ECO:0000314"/>
    <property type="project" value="UniProtKB"/>
</dbReference>
<dbReference type="GO" id="GO:0008170">
    <property type="term" value="F:N-methyltransferase activity"/>
    <property type="evidence" value="ECO:0000314"/>
    <property type="project" value="UniProtKB"/>
</dbReference>
<dbReference type="GO" id="GO:0008757">
    <property type="term" value="F:S-adenosylmethionine-dependent methyltransferase activity"/>
    <property type="evidence" value="ECO:0007669"/>
    <property type="project" value="InterPro"/>
</dbReference>
<dbReference type="GO" id="GO:0009821">
    <property type="term" value="P:alkaloid biosynthetic process"/>
    <property type="evidence" value="ECO:0000314"/>
    <property type="project" value="UniProtKB"/>
</dbReference>
<dbReference type="GO" id="GO:0032259">
    <property type="term" value="P:methylation"/>
    <property type="evidence" value="ECO:0007669"/>
    <property type="project" value="UniProtKB-KW"/>
</dbReference>
<dbReference type="GO" id="GO:1900985">
    <property type="term" value="P:vindoline biosynthetic process"/>
    <property type="evidence" value="ECO:0000314"/>
    <property type="project" value="UniProtKB"/>
</dbReference>
<dbReference type="CDD" id="cd02440">
    <property type="entry name" value="AdoMet_MTases"/>
    <property type="match status" value="1"/>
</dbReference>
<dbReference type="Gene3D" id="3.40.50.150">
    <property type="entry name" value="Vaccinia Virus protein VP39"/>
    <property type="match status" value="1"/>
</dbReference>
<dbReference type="InterPro" id="IPR050447">
    <property type="entry name" value="Erg6_SMT_methyltransf"/>
</dbReference>
<dbReference type="InterPro" id="IPR013216">
    <property type="entry name" value="Methyltransf_11"/>
</dbReference>
<dbReference type="InterPro" id="IPR025774">
    <property type="entry name" value="MTs_g-TMT"/>
</dbReference>
<dbReference type="InterPro" id="IPR029063">
    <property type="entry name" value="SAM-dependent_MTases_sf"/>
</dbReference>
<dbReference type="PANTHER" id="PTHR44068:SF11">
    <property type="entry name" value="GERANYL DIPHOSPHATE 2-C-METHYLTRANSFERASE"/>
    <property type="match status" value="1"/>
</dbReference>
<dbReference type="PANTHER" id="PTHR44068">
    <property type="entry name" value="ZGC:194242"/>
    <property type="match status" value="1"/>
</dbReference>
<dbReference type="Pfam" id="PF08241">
    <property type="entry name" value="Methyltransf_11"/>
    <property type="match status" value="1"/>
</dbReference>
<dbReference type="SUPFAM" id="SSF53335">
    <property type="entry name" value="S-adenosyl-L-methionine-dependent methyltransferases"/>
    <property type="match status" value="1"/>
</dbReference>
<dbReference type="PROSITE" id="PS51581">
    <property type="entry name" value="SAM_GTMT"/>
    <property type="match status" value="1"/>
</dbReference>
<evidence type="ECO:0000250" key="1">
    <source>
        <dbReference type="UniProtKB" id="W5U2K2"/>
    </source>
</evidence>
<evidence type="ECO:0000255" key="2">
    <source>
        <dbReference type="PROSITE-ProRule" id="PRU00914"/>
    </source>
</evidence>
<evidence type="ECO:0000269" key="3">
    <source>
    </source>
</evidence>
<evidence type="ECO:0000269" key="4">
    <source>
    </source>
</evidence>
<evidence type="ECO:0000303" key="5">
    <source>
    </source>
</evidence>
<evidence type="ECO:0000305" key="6">
    <source>
    </source>
</evidence>
<organism>
    <name type="scientific">Vinca minor</name>
    <name type="common">Common periwinkle</name>
    <dbReference type="NCBI Taxonomy" id="60093"/>
    <lineage>
        <taxon>Eukaryota</taxon>
        <taxon>Viridiplantae</taxon>
        <taxon>Streptophyta</taxon>
        <taxon>Embryophyta</taxon>
        <taxon>Tracheophyta</taxon>
        <taxon>Spermatophyta</taxon>
        <taxon>Magnoliopsida</taxon>
        <taxon>eudicotyledons</taxon>
        <taxon>Gunneridae</taxon>
        <taxon>Pentapetalae</taxon>
        <taxon>asterids</taxon>
        <taxon>lamiids</taxon>
        <taxon>Gentianales</taxon>
        <taxon>Apocynaceae</taxon>
        <taxon>Rauvolfioideae</taxon>
        <taxon>Vinceae</taxon>
        <taxon>Vincinae</taxon>
        <taxon>Vinca</taxon>
    </lineage>
</organism>
<protein>
    <recommendedName>
        <fullName evidence="5">Picrinine-N-methytransferase</fullName>
        <shortName evidence="5">VmPiNMT</shortName>
        <ecNumber evidence="3">2.1.1.-</ecNumber>
    </recommendedName>
    <alternativeName>
        <fullName evidence="5">Gamma-tocopherol-like methyltransferase PiNMT</fullName>
        <shortName evidence="5">VmTLMT</shortName>
    </alternativeName>
</protein>
<name>PINMT_VINMI</name>
<sequence>MYTCSIIIYILTFWQLSKIKKQVAAAEKQVMTVTEKQEAVAEFYDKSTDAWEVFFGEHLHDGFYEPGTTATIPGSKVAVVRMIDELLRFAGISDDPEKKPKTMLDVGCGLGGTCLHVAKKYDIKCTGITISPEQVKCAQDLAATQGLESKVSFDVGDALDMPYKDGTFDLVFTIQCIEHIQDKEKFIREMVRVAAPGAPVVIAGYAARNLSPSEESLKPEEKMVLEKICDHIVLSWLCSTGDYVKWLTPLPVQDIKVWDLTQNITPFYPLCIKEAFTWKSFTSLLKMGGWSAIKVVFAVKMMAMAAEEGLLKFAAVTCRKSK</sequence>
<gene>
    <name evidence="5" type="primary">PiNMT</name>
    <name evidence="5" type="synonym">Vm130</name>
</gene>